<proteinExistence type="inferred from homology"/>
<name>RL27_ENT38</name>
<feature type="chain" id="PRO_1000061046" description="Large ribosomal subunit protein bL27">
    <location>
        <begin position="1"/>
        <end position="85"/>
    </location>
</feature>
<feature type="region of interest" description="Disordered" evidence="2">
    <location>
        <begin position="1"/>
        <end position="20"/>
    </location>
</feature>
<keyword id="KW-0687">Ribonucleoprotein</keyword>
<keyword id="KW-0689">Ribosomal protein</keyword>
<protein>
    <recommendedName>
        <fullName evidence="1">Large ribosomal subunit protein bL27</fullName>
    </recommendedName>
    <alternativeName>
        <fullName evidence="3">50S ribosomal protein L27</fullName>
    </alternativeName>
</protein>
<organism>
    <name type="scientific">Enterobacter sp. (strain 638)</name>
    <dbReference type="NCBI Taxonomy" id="399742"/>
    <lineage>
        <taxon>Bacteria</taxon>
        <taxon>Pseudomonadati</taxon>
        <taxon>Pseudomonadota</taxon>
        <taxon>Gammaproteobacteria</taxon>
        <taxon>Enterobacterales</taxon>
        <taxon>Enterobacteriaceae</taxon>
        <taxon>Enterobacter</taxon>
    </lineage>
</organism>
<gene>
    <name evidence="1" type="primary">rpmA</name>
    <name type="ordered locus">Ent638_3621</name>
</gene>
<accession>A4WEZ8</accession>
<evidence type="ECO:0000255" key="1">
    <source>
        <dbReference type="HAMAP-Rule" id="MF_00539"/>
    </source>
</evidence>
<evidence type="ECO:0000256" key="2">
    <source>
        <dbReference type="SAM" id="MobiDB-lite"/>
    </source>
</evidence>
<evidence type="ECO:0000305" key="3"/>
<reference key="1">
    <citation type="journal article" date="2010" name="PLoS Genet.">
        <title>Genome sequence of the plant growth promoting endophytic bacterium Enterobacter sp. 638.</title>
        <authorList>
            <person name="Taghavi S."/>
            <person name="van der Lelie D."/>
            <person name="Hoffman A."/>
            <person name="Zhang Y.B."/>
            <person name="Walla M.D."/>
            <person name="Vangronsveld J."/>
            <person name="Newman L."/>
            <person name="Monchy S."/>
        </authorList>
    </citation>
    <scope>NUCLEOTIDE SEQUENCE [LARGE SCALE GENOMIC DNA]</scope>
    <source>
        <strain>638</strain>
    </source>
</reference>
<comment type="similarity">
    <text evidence="1">Belongs to the bacterial ribosomal protein bL27 family.</text>
</comment>
<dbReference type="EMBL" id="CP000653">
    <property type="protein sequence ID" value="ABP62278.1"/>
    <property type="molecule type" value="Genomic_DNA"/>
</dbReference>
<dbReference type="RefSeq" id="WP_007673187.1">
    <property type="nucleotide sequence ID" value="NC_009436.1"/>
</dbReference>
<dbReference type="SMR" id="A4WEZ8"/>
<dbReference type="STRING" id="399742.Ent638_3621"/>
<dbReference type="GeneID" id="93306590"/>
<dbReference type="KEGG" id="ent:Ent638_3621"/>
<dbReference type="eggNOG" id="COG0211">
    <property type="taxonomic scope" value="Bacteria"/>
</dbReference>
<dbReference type="HOGENOM" id="CLU_095424_4_1_6"/>
<dbReference type="OrthoDB" id="9803474at2"/>
<dbReference type="Proteomes" id="UP000000230">
    <property type="component" value="Chromosome"/>
</dbReference>
<dbReference type="GO" id="GO:0022625">
    <property type="term" value="C:cytosolic large ribosomal subunit"/>
    <property type="evidence" value="ECO:0007669"/>
    <property type="project" value="TreeGrafter"/>
</dbReference>
<dbReference type="GO" id="GO:0003735">
    <property type="term" value="F:structural constituent of ribosome"/>
    <property type="evidence" value="ECO:0007669"/>
    <property type="project" value="InterPro"/>
</dbReference>
<dbReference type="GO" id="GO:0006412">
    <property type="term" value="P:translation"/>
    <property type="evidence" value="ECO:0007669"/>
    <property type="project" value="UniProtKB-UniRule"/>
</dbReference>
<dbReference type="FunFam" id="2.40.50.100:FF:000001">
    <property type="entry name" value="50S ribosomal protein L27"/>
    <property type="match status" value="1"/>
</dbReference>
<dbReference type="Gene3D" id="2.40.50.100">
    <property type="match status" value="1"/>
</dbReference>
<dbReference type="HAMAP" id="MF_00539">
    <property type="entry name" value="Ribosomal_bL27"/>
    <property type="match status" value="1"/>
</dbReference>
<dbReference type="InterPro" id="IPR001684">
    <property type="entry name" value="Ribosomal_bL27"/>
</dbReference>
<dbReference type="InterPro" id="IPR018261">
    <property type="entry name" value="Ribosomal_bL27_CS"/>
</dbReference>
<dbReference type="NCBIfam" id="TIGR00062">
    <property type="entry name" value="L27"/>
    <property type="match status" value="1"/>
</dbReference>
<dbReference type="PANTHER" id="PTHR15893:SF0">
    <property type="entry name" value="LARGE RIBOSOMAL SUBUNIT PROTEIN BL27M"/>
    <property type="match status" value="1"/>
</dbReference>
<dbReference type="PANTHER" id="PTHR15893">
    <property type="entry name" value="RIBOSOMAL PROTEIN L27"/>
    <property type="match status" value="1"/>
</dbReference>
<dbReference type="Pfam" id="PF01016">
    <property type="entry name" value="Ribosomal_L27"/>
    <property type="match status" value="1"/>
</dbReference>
<dbReference type="PRINTS" id="PR00063">
    <property type="entry name" value="RIBOSOMALL27"/>
</dbReference>
<dbReference type="SUPFAM" id="SSF110324">
    <property type="entry name" value="Ribosomal L27 protein-like"/>
    <property type="match status" value="1"/>
</dbReference>
<dbReference type="PROSITE" id="PS00831">
    <property type="entry name" value="RIBOSOMAL_L27"/>
    <property type="match status" value="1"/>
</dbReference>
<sequence length="85" mass="9153">MAHKKAGGSTRNGRDSEAKRLGVKRFGGETVLAGSIIVRQRGTKFHAGNNVGCGRDHTLFAKADGKVKFEVKGPNNRKYISIVAE</sequence>